<reference key="1">
    <citation type="journal article" date="2001" name="Science">
        <title>Complete genome sequence of a virulent isolate of Streptococcus pneumoniae.</title>
        <authorList>
            <person name="Tettelin H."/>
            <person name="Nelson K.E."/>
            <person name="Paulsen I.T."/>
            <person name="Eisen J.A."/>
            <person name="Read T.D."/>
            <person name="Peterson S.N."/>
            <person name="Heidelberg J.F."/>
            <person name="DeBoy R.T."/>
            <person name="Haft D.H."/>
            <person name="Dodson R.J."/>
            <person name="Durkin A.S."/>
            <person name="Gwinn M.L."/>
            <person name="Kolonay J.F."/>
            <person name="Nelson W.C."/>
            <person name="Peterson J.D."/>
            <person name="Umayam L.A."/>
            <person name="White O."/>
            <person name="Salzberg S.L."/>
            <person name="Lewis M.R."/>
            <person name="Radune D."/>
            <person name="Holtzapple E.K."/>
            <person name="Khouri H.M."/>
            <person name="Wolf A.M."/>
            <person name="Utterback T.R."/>
            <person name="Hansen C.L."/>
            <person name="McDonald L.A."/>
            <person name="Feldblyum T.V."/>
            <person name="Angiuoli S.V."/>
            <person name="Dickinson T."/>
            <person name="Hickey E.K."/>
            <person name="Holt I.E."/>
            <person name="Loftus B.J."/>
            <person name="Yang F."/>
            <person name="Smith H.O."/>
            <person name="Venter J.C."/>
            <person name="Dougherty B.A."/>
            <person name="Morrison D.A."/>
            <person name="Hollingshead S.K."/>
            <person name="Fraser C.M."/>
        </authorList>
    </citation>
    <scope>NUCLEOTIDE SEQUENCE [LARGE SCALE GENOMIC DNA]</scope>
    <source>
        <strain>ATCC BAA-334 / TIGR4</strain>
    </source>
</reference>
<gene>
    <name evidence="1" type="primary">dltC</name>
    <name type="ordered locus">SP_2174</name>
</gene>
<name>DLTC_STRPN</name>
<evidence type="ECO:0000255" key="1">
    <source>
        <dbReference type="HAMAP-Rule" id="MF_00565"/>
    </source>
</evidence>
<sequence length="79" mass="8980">MDIKSEVIEIIDELFMEDVSDMMDEDLFDAGVLDSMGTVELIVEIENRFDIRVPVTEFGRDDWNTANKIIAGIVELQNA</sequence>
<feature type="chain" id="PRO_0000213112" description="D-alanyl carrier protein">
    <location>
        <begin position="1"/>
        <end position="79"/>
    </location>
</feature>
<feature type="domain" description="Carrier" evidence="1">
    <location>
        <begin position="1"/>
        <end position="77"/>
    </location>
</feature>
<feature type="modified residue" description="O-(pantetheine 4'-phosphoryl)serine" evidence="1">
    <location>
        <position position="35"/>
    </location>
</feature>
<comment type="function">
    <text evidence="1">Carrier protein involved in the D-alanylation of lipoteichoic acid (LTA). The loading of thioester-linked D-alanine onto DltC is catalyzed by D-alanine--D-alanyl carrier protein ligase DltA. The DltC-carried D-alanyl group is further transferred to cell membrane phosphatidylglycerol (PG) by forming an ester bond, probably catalyzed by DltD. D-alanylation of LTA plays an important role in modulating the properties of the cell wall in Gram-positive bacteria, influencing the net charge of the cell wall.</text>
</comment>
<comment type="pathway">
    <text evidence="1">Cell wall biogenesis; lipoteichoic acid biosynthesis.</text>
</comment>
<comment type="interaction">
    <interactant intactId="EBI-6472833">
        <id>P63957</id>
    </interactant>
    <interactant intactId="EBI-6472841">
        <id>P67266</id>
        <label>SP_1102</label>
    </interactant>
    <organismsDiffer>false</organismsDiffer>
    <experiments>3</experiments>
</comment>
<comment type="subcellular location">
    <subcellularLocation>
        <location evidence="1">Cytoplasm</location>
    </subcellularLocation>
</comment>
<comment type="PTM">
    <text evidence="1">4'-phosphopantetheine is transferred from CoA to a specific serine of apo-DCP.</text>
</comment>
<comment type="similarity">
    <text evidence="1">Belongs to the DltC family.</text>
</comment>
<dbReference type="EMBL" id="AE005672">
    <property type="protein sequence ID" value="AAK76228.1"/>
    <property type="molecule type" value="Genomic_DNA"/>
</dbReference>
<dbReference type="PIR" id="C95254">
    <property type="entry name" value="C95254"/>
</dbReference>
<dbReference type="RefSeq" id="WP_000351967.1">
    <property type="nucleotide sequence ID" value="NZ_CP155539.1"/>
</dbReference>
<dbReference type="SMR" id="P63957"/>
<dbReference type="IntAct" id="P63957">
    <property type="interactions" value="1"/>
</dbReference>
<dbReference type="PaxDb" id="170187-SP_2174"/>
<dbReference type="EnsemblBacteria" id="AAK76228">
    <property type="protein sequence ID" value="AAK76228"/>
    <property type="gene ID" value="SP_2174"/>
</dbReference>
<dbReference type="GeneID" id="93738863"/>
<dbReference type="KEGG" id="spn:SP_2174"/>
<dbReference type="eggNOG" id="COG0236">
    <property type="taxonomic scope" value="Bacteria"/>
</dbReference>
<dbReference type="PhylomeDB" id="P63957"/>
<dbReference type="BioCyc" id="SPNE170187:G1FZB-2269-MONOMER"/>
<dbReference type="UniPathway" id="UPA00556"/>
<dbReference type="Proteomes" id="UP000000585">
    <property type="component" value="Chromosome"/>
</dbReference>
<dbReference type="GO" id="GO:0005737">
    <property type="term" value="C:cytoplasm"/>
    <property type="evidence" value="ECO:0007669"/>
    <property type="project" value="UniProtKB-SubCell"/>
</dbReference>
<dbReference type="GO" id="GO:0036370">
    <property type="term" value="F:D-alanyl carrier activity"/>
    <property type="evidence" value="ECO:0007669"/>
    <property type="project" value="UniProtKB-UniRule"/>
</dbReference>
<dbReference type="GO" id="GO:0071555">
    <property type="term" value="P:cell wall organization"/>
    <property type="evidence" value="ECO:0007669"/>
    <property type="project" value="UniProtKB-KW"/>
</dbReference>
<dbReference type="GO" id="GO:0070395">
    <property type="term" value="P:lipoteichoic acid biosynthetic process"/>
    <property type="evidence" value="ECO:0007669"/>
    <property type="project" value="UniProtKB-UniRule"/>
</dbReference>
<dbReference type="Gene3D" id="1.10.1200.10">
    <property type="entry name" value="ACP-like"/>
    <property type="match status" value="1"/>
</dbReference>
<dbReference type="HAMAP" id="MF_00565">
    <property type="entry name" value="DltC"/>
    <property type="match status" value="1"/>
</dbReference>
<dbReference type="InterPro" id="IPR036736">
    <property type="entry name" value="ACP-like_sf"/>
</dbReference>
<dbReference type="InterPro" id="IPR003230">
    <property type="entry name" value="DltC"/>
</dbReference>
<dbReference type="InterPro" id="IPR009081">
    <property type="entry name" value="PP-bd_ACP"/>
</dbReference>
<dbReference type="NCBIfam" id="TIGR01688">
    <property type="entry name" value="dltC"/>
    <property type="match status" value="1"/>
</dbReference>
<dbReference type="NCBIfam" id="NF003464">
    <property type="entry name" value="PRK05087.1"/>
    <property type="match status" value="1"/>
</dbReference>
<dbReference type="Pfam" id="PF00550">
    <property type="entry name" value="PP-binding"/>
    <property type="match status" value="1"/>
</dbReference>
<dbReference type="SUPFAM" id="SSF47336">
    <property type="entry name" value="ACP-like"/>
    <property type="match status" value="1"/>
</dbReference>
<dbReference type="PROSITE" id="PS50075">
    <property type="entry name" value="CARRIER"/>
    <property type="match status" value="1"/>
</dbReference>
<keyword id="KW-0961">Cell wall biogenesis/degradation</keyword>
<keyword id="KW-0963">Cytoplasm</keyword>
<keyword id="KW-0596">Phosphopantetheine</keyword>
<keyword id="KW-0597">Phosphoprotein</keyword>
<keyword id="KW-1185">Reference proteome</keyword>
<accession>P63957</accession>
<accession>Q97N84</accession>
<organism>
    <name type="scientific">Streptococcus pneumoniae serotype 4 (strain ATCC BAA-334 / TIGR4)</name>
    <dbReference type="NCBI Taxonomy" id="170187"/>
    <lineage>
        <taxon>Bacteria</taxon>
        <taxon>Bacillati</taxon>
        <taxon>Bacillota</taxon>
        <taxon>Bacilli</taxon>
        <taxon>Lactobacillales</taxon>
        <taxon>Streptococcaceae</taxon>
        <taxon>Streptococcus</taxon>
    </lineage>
</organism>
<protein>
    <recommendedName>
        <fullName evidence="1">D-alanyl carrier protein</fullName>
        <shortName evidence="1">DCP</shortName>
    </recommendedName>
    <alternativeName>
        <fullName evidence="1">D-alanine--poly(phosphoribitol) ligase subunit 2</fullName>
    </alternativeName>
</protein>
<proteinExistence type="evidence at protein level"/>